<proteinExistence type="evidence at transcript level"/>
<reference key="1">
    <citation type="journal article" date="2005" name="Science">
        <title>The transcriptional landscape of the mammalian genome.</title>
        <authorList>
            <person name="Carninci P."/>
            <person name="Kasukawa T."/>
            <person name="Katayama S."/>
            <person name="Gough J."/>
            <person name="Frith M.C."/>
            <person name="Maeda N."/>
            <person name="Oyama R."/>
            <person name="Ravasi T."/>
            <person name="Lenhard B."/>
            <person name="Wells C."/>
            <person name="Kodzius R."/>
            <person name="Shimokawa K."/>
            <person name="Bajic V.B."/>
            <person name="Brenner S.E."/>
            <person name="Batalov S."/>
            <person name="Forrest A.R."/>
            <person name="Zavolan M."/>
            <person name="Davis M.J."/>
            <person name="Wilming L.G."/>
            <person name="Aidinis V."/>
            <person name="Allen J.E."/>
            <person name="Ambesi-Impiombato A."/>
            <person name="Apweiler R."/>
            <person name="Aturaliya R.N."/>
            <person name="Bailey T.L."/>
            <person name="Bansal M."/>
            <person name="Baxter L."/>
            <person name="Beisel K.W."/>
            <person name="Bersano T."/>
            <person name="Bono H."/>
            <person name="Chalk A.M."/>
            <person name="Chiu K.P."/>
            <person name="Choudhary V."/>
            <person name="Christoffels A."/>
            <person name="Clutterbuck D.R."/>
            <person name="Crowe M.L."/>
            <person name="Dalla E."/>
            <person name="Dalrymple B.P."/>
            <person name="de Bono B."/>
            <person name="Della Gatta G."/>
            <person name="di Bernardo D."/>
            <person name="Down T."/>
            <person name="Engstrom P."/>
            <person name="Fagiolini M."/>
            <person name="Faulkner G."/>
            <person name="Fletcher C.F."/>
            <person name="Fukushima T."/>
            <person name="Furuno M."/>
            <person name="Futaki S."/>
            <person name="Gariboldi M."/>
            <person name="Georgii-Hemming P."/>
            <person name="Gingeras T.R."/>
            <person name="Gojobori T."/>
            <person name="Green R.E."/>
            <person name="Gustincich S."/>
            <person name="Harbers M."/>
            <person name="Hayashi Y."/>
            <person name="Hensch T.K."/>
            <person name="Hirokawa N."/>
            <person name="Hill D."/>
            <person name="Huminiecki L."/>
            <person name="Iacono M."/>
            <person name="Ikeo K."/>
            <person name="Iwama A."/>
            <person name="Ishikawa T."/>
            <person name="Jakt M."/>
            <person name="Kanapin A."/>
            <person name="Katoh M."/>
            <person name="Kawasawa Y."/>
            <person name="Kelso J."/>
            <person name="Kitamura H."/>
            <person name="Kitano H."/>
            <person name="Kollias G."/>
            <person name="Krishnan S.P."/>
            <person name="Kruger A."/>
            <person name="Kummerfeld S.K."/>
            <person name="Kurochkin I.V."/>
            <person name="Lareau L.F."/>
            <person name="Lazarevic D."/>
            <person name="Lipovich L."/>
            <person name="Liu J."/>
            <person name="Liuni S."/>
            <person name="McWilliam S."/>
            <person name="Madan Babu M."/>
            <person name="Madera M."/>
            <person name="Marchionni L."/>
            <person name="Matsuda H."/>
            <person name="Matsuzawa S."/>
            <person name="Miki H."/>
            <person name="Mignone F."/>
            <person name="Miyake S."/>
            <person name="Morris K."/>
            <person name="Mottagui-Tabar S."/>
            <person name="Mulder N."/>
            <person name="Nakano N."/>
            <person name="Nakauchi H."/>
            <person name="Ng P."/>
            <person name="Nilsson R."/>
            <person name="Nishiguchi S."/>
            <person name="Nishikawa S."/>
            <person name="Nori F."/>
            <person name="Ohara O."/>
            <person name="Okazaki Y."/>
            <person name="Orlando V."/>
            <person name="Pang K.C."/>
            <person name="Pavan W.J."/>
            <person name="Pavesi G."/>
            <person name="Pesole G."/>
            <person name="Petrovsky N."/>
            <person name="Piazza S."/>
            <person name="Reed J."/>
            <person name="Reid J.F."/>
            <person name="Ring B.Z."/>
            <person name="Ringwald M."/>
            <person name="Rost B."/>
            <person name="Ruan Y."/>
            <person name="Salzberg S.L."/>
            <person name="Sandelin A."/>
            <person name="Schneider C."/>
            <person name="Schoenbach C."/>
            <person name="Sekiguchi K."/>
            <person name="Semple C.A."/>
            <person name="Seno S."/>
            <person name="Sessa L."/>
            <person name="Sheng Y."/>
            <person name="Shibata Y."/>
            <person name="Shimada H."/>
            <person name="Shimada K."/>
            <person name="Silva D."/>
            <person name="Sinclair B."/>
            <person name="Sperling S."/>
            <person name="Stupka E."/>
            <person name="Sugiura K."/>
            <person name="Sultana R."/>
            <person name="Takenaka Y."/>
            <person name="Taki K."/>
            <person name="Tammoja K."/>
            <person name="Tan S.L."/>
            <person name="Tang S."/>
            <person name="Taylor M.S."/>
            <person name="Tegner J."/>
            <person name="Teichmann S.A."/>
            <person name="Ueda H.R."/>
            <person name="van Nimwegen E."/>
            <person name="Verardo R."/>
            <person name="Wei C.L."/>
            <person name="Yagi K."/>
            <person name="Yamanishi H."/>
            <person name="Zabarovsky E."/>
            <person name="Zhu S."/>
            <person name="Zimmer A."/>
            <person name="Hide W."/>
            <person name="Bult C."/>
            <person name="Grimmond S.M."/>
            <person name="Teasdale R.D."/>
            <person name="Liu E.T."/>
            <person name="Brusic V."/>
            <person name="Quackenbush J."/>
            <person name="Wahlestedt C."/>
            <person name="Mattick J.S."/>
            <person name="Hume D.A."/>
            <person name="Kai C."/>
            <person name="Sasaki D."/>
            <person name="Tomaru Y."/>
            <person name="Fukuda S."/>
            <person name="Kanamori-Katayama M."/>
            <person name="Suzuki M."/>
            <person name="Aoki J."/>
            <person name="Arakawa T."/>
            <person name="Iida J."/>
            <person name="Imamura K."/>
            <person name="Itoh M."/>
            <person name="Kato T."/>
            <person name="Kawaji H."/>
            <person name="Kawagashira N."/>
            <person name="Kawashima T."/>
            <person name="Kojima M."/>
            <person name="Kondo S."/>
            <person name="Konno H."/>
            <person name="Nakano K."/>
            <person name="Ninomiya N."/>
            <person name="Nishio T."/>
            <person name="Okada M."/>
            <person name="Plessy C."/>
            <person name="Shibata K."/>
            <person name="Shiraki T."/>
            <person name="Suzuki S."/>
            <person name="Tagami M."/>
            <person name="Waki K."/>
            <person name="Watahiki A."/>
            <person name="Okamura-Oho Y."/>
            <person name="Suzuki H."/>
            <person name="Kawai J."/>
            <person name="Hayashizaki Y."/>
        </authorList>
    </citation>
    <scope>NUCLEOTIDE SEQUENCE [LARGE SCALE MRNA] (ISOFORM 2)</scope>
    <source>
        <strain>C57BL/6J</strain>
        <tissue>Testis</tissue>
    </source>
</reference>
<reference key="2">
    <citation type="journal article" date="2003" name="DNA Res.">
        <title>Prediction of the coding sequences of mouse homologues of KIAA gene: II. The complete nucleotide sequences of 400 mouse KIAA-homologous cDNAs identified by screening of terminal sequences of cDNA clones randomly sampled from size-fractionated libraries.</title>
        <authorList>
            <person name="Okazaki N."/>
            <person name="Kikuno R."/>
            <person name="Ohara R."/>
            <person name="Inamoto S."/>
            <person name="Aizawa H."/>
            <person name="Yuasa S."/>
            <person name="Nakajima D."/>
            <person name="Nagase T."/>
            <person name="Ohara O."/>
            <person name="Koga H."/>
        </authorList>
    </citation>
    <scope>NUCLEOTIDE SEQUENCE [LARGE SCALE MRNA] (ISOFORM 3)</scope>
    <source>
        <tissue>Brain</tissue>
    </source>
</reference>
<reference key="3">
    <citation type="journal article" date="2004" name="Genome Res.">
        <title>The status, quality, and expansion of the NIH full-length cDNA project: the Mammalian Gene Collection (MGC).</title>
        <authorList>
            <consortium name="The MGC Project Team"/>
        </authorList>
    </citation>
    <scope>NUCLEOTIDE SEQUENCE [LARGE SCALE MRNA] (ISOFORM 1)</scope>
    <source>
        <strain>C57BL/6J</strain>
        <tissue>Brain</tissue>
        <tissue>Mammary tumor</tissue>
    </source>
</reference>
<reference key="4">
    <citation type="journal article" date="2001" name="Biochem. Biophys. Res. Commun.">
        <title>FUP1, a gene associated with hepatocellular carcinoma, stimulates NIH3T3 cell proliferation and tumor formation in nude mice.</title>
        <authorList>
            <person name="Pan W."/>
            <person name="Zhang Q."/>
            <person name="Xi Q.S."/>
            <person name="Gan R.B."/>
            <person name="Li T.P."/>
        </authorList>
    </citation>
    <scope>SUBCELLULAR LOCATION</scope>
</reference>
<reference key="5">
    <citation type="journal article" date="2010" name="Science">
        <title>Btbd7 regulates epithelial cell dynamics and branching morphogenesis.</title>
        <authorList>
            <person name="Onodera T."/>
            <person name="Sakai T."/>
            <person name="Hsu J.C."/>
            <person name="Matsumoto K."/>
            <person name="Chiorini J.A."/>
            <person name="Yamada K.M."/>
        </authorList>
    </citation>
    <scope>FUNCTION</scope>
    <scope>TISSUE SPECIFICITY</scope>
    <scope>INDUCTION</scope>
</reference>
<dbReference type="EMBL" id="AK033160">
    <property type="protein sequence ID" value="BAC28177.1"/>
    <property type="molecule type" value="mRNA"/>
</dbReference>
<dbReference type="EMBL" id="AK122522">
    <property type="protein sequence ID" value="BAC65804.1"/>
    <property type="status" value="ALT_INIT"/>
    <property type="molecule type" value="mRNA"/>
</dbReference>
<dbReference type="EMBL" id="BC041669">
    <property type="protein sequence ID" value="AAH41669.1"/>
    <property type="molecule type" value="mRNA"/>
</dbReference>
<dbReference type="EMBL" id="BC057303">
    <property type="protein sequence ID" value="AAH57303.1"/>
    <property type="molecule type" value="mRNA"/>
</dbReference>
<dbReference type="CCDS" id="CCDS26125.1">
    <molecule id="Q8CFE5-1"/>
</dbReference>
<dbReference type="RefSeq" id="NP_001363955.1">
    <molecule id="Q8CFE5-1"/>
    <property type="nucleotide sequence ID" value="NM_001377026.1"/>
</dbReference>
<dbReference type="RefSeq" id="NP_766394.2">
    <molecule id="Q8CFE5-1"/>
    <property type="nucleotide sequence ID" value="NM_172806.2"/>
</dbReference>
<dbReference type="RefSeq" id="XP_006515918.1">
    <property type="nucleotide sequence ID" value="XM_006515855.3"/>
</dbReference>
<dbReference type="FunCoup" id="Q8CFE5">
    <property type="interactions" value="3522"/>
</dbReference>
<dbReference type="STRING" id="10090.ENSMUSP00000152426"/>
<dbReference type="iPTMnet" id="Q8CFE5"/>
<dbReference type="PhosphoSitePlus" id="Q8CFE5"/>
<dbReference type="jPOST" id="Q8CFE5"/>
<dbReference type="PaxDb" id="10090-ENSMUSP00000046951"/>
<dbReference type="ProteomicsDB" id="273560">
    <molecule id="Q8CFE5-1"/>
</dbReference>
<dbReference type="ProteomicsDB" id="273561">
    <molecule id="Q8CFE5-2"/>
</dbReference>
<dbReference type="ProteomicsDB" id="273562">
    <molecule id="Q8CFE5-3"/>
</dbReference>
<dbReference type="Antibodypedia" id="55719">
    <property type="antibodies" value="116 antibodies from 25 providers"/>
</dbReference>
<dbReference type="Ensembl" id="ENSMUST00000045652.8">
    <molecule id="Q8CFE5-1"/>
    <property type="protein sequence ID" value="ENSMUSP00000046951.7"/>
    <property type="gene ID" value="ENSMUSG00000041702.8"/>
</dbReference>
<dbReference type="Ensembl" id="ENSMUST00000223554.2">
    <molecule id="Q8CFE5-1"/>
    <property type="protein sequence ID" value="ENSMUSP00000152426.2"/>
    <property type="gene ID" value="ENSMUSG00000041702.8"/>
</dbReference>
<dbReference type="GeneID" id="238386"/>
<dbReference type="KEGG" id="mmu:238386"/>
<dbReference type="UCSC" id="uc007ouq.1">
    <molecule id="Q8CFE5-1"/>
    <property type="organism name" value="mouse"/>
</dbReference>
<dbReference type="UCSC" id="uc007ous.1">
    <molecule id="Q8CFE5-3"/>
    <property type="organism name" value="mouse"/>
</dbReference>
<dbReference type="UCSC" id="uc007ouu.1">
    <molecule id="Q8CFE5-2"/>
    <property type="organism name" value="mouse"/>
</dbReference>
<dbReference type="AGR" id="MGI:1917858"/>
<dbReference type="CTD" id="55727"/>
<dbReference type="MGI" id="MGI:1917858">
    <property type="gene designation" value="Btbd7"/>
</dbReference>
<dbReference type="VEuPathDB" id="HostDB:ENSMUSG00000041702"/>
<dbReference type="eggNOG" id="KOG2838">
    <property type="taxonomic scope" value="Eukaryota"/>
</dbReference>
<dbReference type="GeneTree" id="ENSGT00390000014092"/>
<dbReference type="HOGENOM" id="CLU_007289_0_0_1"/>
<dbReference type="InParanoid" id="Q8CFE5"/>
<dbReference type="OMA" id="ILMKFHR"/>
<dbReference type="OrthoDB" id="2347980at2759"/>
<dbReference type="PhylomeDB" id="Q8CFE5"/>
<dbReference type="TreeFam" id="TF316112"/>
<dbReference type="BioGRID-ORCS" id="238386">
    <property type="hits" value="2 hits in 78 CRISPR screens"/>
</dbReference>
<dbReference type="ChiTaRS" id="Btbd7">
    <property type="organism name" value="mouse"/>
</dbReference>
<dbReference type="PRO" id="PR:Q8CFE5"/>
<dbReference type="Proteomes" id="UP000000589">
    <property type="component" value="Chromosome 12"/>
</dbReference>
<dbReference type="RNAct" id="Q8CFE5">
    <property type="molecule type" value="protein"/>
</dbReference>
<dbReference type="Bgee" id="ENSMUSG00000041702">
    <property type="expression patterns" value="Expressed in otolith organ and 223 other cell types or tissues"/>
</dbReference>
<dbReference type="GO" id="GO:0005634">
    <property type="term" value="C:nucleus"/>
    <property type="evidence" value="ECO:0000314"/>
    <property type="project" value="UniProtKB"/>
</dbReference>
<dbReference type="GO" id="GO:0061138">
    <property type="term" value="P:morphogenesis of a branching epithelium"/>
    <property type="evidence" value="ECO:0007669"/>
    <property type="project" value="InterPro"/>
</dbReference>
<dbReference type="GO" id="GO:0060693">
    <property type="term" value="P:regulation of branching involved in salivary gland morphogenesis"/>
    <property type="evidence" value="ECO:0000315"/>
    <property type="project" value="MGI"/>
</dbReference>
<dbReference type="CDD" id="cd18489">
    <property type="entry name" value="BACK_BTBD7"/>
    <property type="match status" value="1"/>
</dbReference>
<dbReference type="CDD" id="cd18283">
    <property type="entry name" value="BTB1_POZ_BTBD7"/>
    <property type="match status" value="1"/>
</dbReference>
<dbReference type="CDD" id="cd18284">
    <property type="entry name" value="BTB2_POZ_BTBD7"/>
    <property type="match status" value="1"/>
</dbReference>
<dbReference type="FunFam" id="3.30.710.10:FF:000055">
    <property type="entry name" value="BTB/POZ domain-containing protein 7"/>
    <property type="match status" value="1"/>
</dbReference>
<dbReference type="Gene3D" id="1.25.40.420">
    <property type="match status" value="1"/>
</dbReference>
<dbReference type="Gene3D" id="3.30.710.10">
    <property type="entry name" value="Potassium Channel Kv1.1, Chain A"/>
    <property type="match status" value="2"/>
</dbReference>
<dbReference type="InterPro" id="IPR011705">
    <property type="entry name" value="BACK"/>
</dbReference>
<dbReference type="InterPro" id="IPR000210">
    <property type="entry name" value="BTB/POZ_dom"/>
</dbReference>
<dbReference type="InterPro" id="IPR042345">
    <property type="entry name" value="Btbd7"/>
</dbReference>
<dbReference type="InterPro" id="IPR047936">
    <property type="entry name" value="BTBD7_BACK"/>
</dbReference>
<dbReference type="InterPro" id="IPR047934">
    <property type="entry name" value="BTBD7_BTB_POZ_first"/>
</dbReference>
<dbReference type="InterPro" id="IPR047935">
    <property type="entry name" value="BTBD7_BTB_POZ_second"/>
</dbReference>
<dbReference type="InterPro" id="IPR011333">
    <property type="entry name" value="SKP1/BTB/POZ_sf"/>
</dbReference>
<dbReference type="PANTHER" id="PTHR16064">
    <property type="entry name" value="BTB POZ DOMAIN CONTAINING 7"/>
    <property type="match status" value="1"/>
</dbReference>
<dbReference type="PANTHER" id="PTHR16064:SF3">
    <property type="entry name" value="BTB_POZ DOMAIN-CONTAINING PROTEIN 7"/>
    <property type="match status" value="1"/>
</dbReference>
<dbReference type="Pfam" id="PF07707">
    <property type="entry name" value="BACK"/>
    <property type="match status" value="1"/>
</dbReference>
<dbReference type="Pfam" id="PF00651">
    <property type="entry name" value="BTB"/>
    <property type="match status" value="2"/>
</dbReference>
<dbReference type="SMART" id="SM00875">
    <property type="entry name" value="BACK"/>
    <property type="match status" value="1"/>
</dbReference>
<dbReference type="SMART" id="SM00225">
    <property type="entry name" value="BTB"/>
    <property type="match status" value="2"/>
</dbReference>
<dbReference type="SUPFAM" id="SSF54695">
    <property type="entry name" value="POZ domain"/>
    <property type="match status" value="2"/>
</dbReference>
<dbReference type="PROSITE" id="PS50097">
    <property type="entry name" value="BTB"/>
    <property type="match status" value="2"/>
</dbReference>
<sequence length="1130" mass="126243">MGANASNYPHSCSPRVGGNSQAQQTFIGTSSYSQQGYGCESKLYSLDHGHEKPQDKKKRTSGLATLKKKFIKRRKSNRSADHAKQMRELLSGWDVRDVNALVEEYEGTSALKELSLQASLARPEARTLQKDMADLYEDKYCTDVDLIFQETCFPVHRAILAARCPFFKTLLSSSPEYGAEIIMDISTAGIDMPMFSALLHYLYTGEFGMEDSRFQNVDILVQLSEEFGTPNPLDVDMRGLFDYMCYYDVVLSFSSDSELVEAFGGNQNCLDEELKAHKAIISARSPFFRNLLQRRIRTGEEITDRTLRTPTRIILDESIIPKKYAKVILHCMYTDVVDLSVLHCSPSVGSLSEVQALVAGKPNMTRAEEAMELYHIALFLEFNMLAQGCEDIIAESISLDTLIAVLKWSSHPYGSKWVHRQAVHFLCEELSQVMTSDVFYELSKDHLLTAIQSDYLQASEQDILKYLIKWGEHQLMKRIADREPNLLSGTAHSVNKRGVKRRDLDIEELREILSSLLPFVRIEHILPINSEVLSDAMKRGLISTPPSDMLPTAEGGKSNAWLRQKNAGIYVRPRLFSPYVEEAKSVLDEMMVEQTDLVRLRMVRMSNVPDTLYMVSNAMPQCCHMISHQQISSNQSSPPSVVANEIPVPRLLIMKDMVRRLQELRHTEQVQRAYALNCGEGATVSYEIQIRVLREFGLADAAAELLQNPHKFFPDERFGDESPLLTMRQPGRCRVNSTPTAETMFTDLDSFVAFHPPLPPPPPPYHPPATPIHNQLKAGWKQRPPSHHPSRSFSYPCNHSLFHCRTAPKPGPPPVYLPGVKVAPPDCTNTTGLGRQTVAAAAAAAAASAAIIPEKQVCPQPVLNDLMPDIAMGVSTLSLKDRRLPELAADTELCQTVSEAGTGPPQHLSCIPQRHTNTSRKKPTLEQKADGRENQQEYPDLYDFSNAACRPSTPAPGRHSPSPAHGRYFGPDLYSHNKASPNGLKSVYLPGQTSPKKQEDPRREYPPSPDGHPHRQKREPIRLDVVEQPPQRPDFPSAASENASHGPAHVRARTAVETDLTFGLTSNRPPSHSACSSEVLEERSSRRLTDSEPLGHGAHQRNADLERGDSISRGRRSPSKPDFLYKKSAL</sequence>
<organism>
    <name type="scientific">Mus musculus</name>
    <name type="common">Mouse</name>
    <dbReference type="NCBI Taxonomy" id="10090"/>
    <lineage>
        <taxon>Eukaryota</taxon>
        <taxon>Metazoa</taxon>
        <taxon>Chordata</taxon>
        <taxon>Craniata</taxon>
        <taxon>Vertebrata</taxon>
        <taxon>Euteleostomi</taxon>
        <taxon>Mammalia</taxon>
        <taxon>Eutheria</taxon>
        <taxon>Euarchontoglires</taxon>
        <taxon>Glires</taxon>
        <taxon>Rodentia</taxon>
        <taxon>Myomorpha</taxon>
        <taxon>Muroidea</taxon>
        <taxon>Muridae</taxon>
        <taxon>Murinae</taxon>
        <taxon>Mus</taxon>
        <taxon>Mus</taxon>
    </lineage>
</organism>
<gene>
    <name type="primary">Btbd7</name>
    <name type="synonym">Fup1</name>
    <name type="synonym">Kiaa1525</name>
</gene>
<comment type="function">
    <text evidence="6">Acts as a mediator of epithelial dynamics and organ branching by promoting cleft progression. Induced following accumulation of fibronectin in forming clefts, leading to local expression of the cell-scattering SNAIL2 and suppression of E-cadherin levels, thereby altering cell morphology and reducing cell-cell adhesion. This stimulates cell separation at the base of forming clefts by local, dynamic intercellular gap formation and promotes cleft progression.</text>
</comment>
<comment type="subcellular location">
    <subcellularLocation>
        <location evidence="5">Nucleus</location>
    </subcellularLocation>
</comment>
<comment type="alternative products">
    <event type="alternative splicing"/>
    <isoform>
        <id>Q8CFE5-1</id>
        <name>1</name>
        <sequence type="displayed"/>
    </isoform>
    <isoform>
        <id>Q8CFE5-2</id>
        <name>2</name>
        <sequence type="described" ref="VSP_013828 VSP_013829"/>
    </isoform>
    <isoform>
        <id>Q8CFE5-3</id>
        <name>3</name>
        <sequence type="described" ref="VSP_013830 VSP_013831"/>
    </isoform>
</comment>
<comment type="tissue specificity">
    <text evidence="6">Specifically expressed in embryonic epithelia.</text>
</comment>
<comment type="developmental stage">
    <text>Highly expressed in developing salivary glands at 13 dpc, a stage of particularly active salivary gland branching. Concentrated around the bottom and lower sides of forming clefts, while it is weakly or not expressed in other salivary epithelial regions. Also expressed in mesenchyme containing high levels of fibronectin.</text>
</comment>
<comment type="induction">
    <text evidence="6">By fibronectin.</text>
</comment>
<comment type="sequence caution" evidence="9">
    <conflict type="erroneous initiation">
        <sequence resource="EMBL-CDS" id="BAC65804"/>
    </conflict>
    <text>Extended N-terminus.</text>
</comment>
<name>BTBD7_MOUSE</name>
<keyword id="KW-0025">Alternative splicing</keyword>
<keyword id="KW-0217">Developmental protein</keyword>
<keyword id="KW-0449">Lipoprotein</keyword>
<keyword id="KW-0519">Myristate</keyword>
<keyword id="KW-0539">Nucleus</keyword>
<keyword id="KW-0597">Phosphoprotein</keyword>
<keyword id="KW-1185">Reference proteome</keyword>
<keyword id="KW-0677">Repeat</keyword>
<protein>
    <recommendedName>
        <fullName>BTB/POZ domain-containing protein 7</fullName>
    </recommendedName>
    <alternativeName>
        <fullName>Function-unkown protein 1</fullName>
    </alternativeName>
</protein>
<feature type="initiator methionine" description="Removed">
    <location>
        <position position="1"/>
    </location>
</feature>
<feature type="chain" id="PRO_0000186216" description="BTB/POZ domain-containing protein 7">
    <location>
        <begin position="2"/>
        <end position="1130"/>
    </location>
</feature>
<feature type="domain" description="BTB 1" evidence="3">
    <location>
        <begin position="142"/>
        <end position="211"/>
    </location>
</feature>
<feature type="domain" description="BTB 2" evidence="3">
    <location>
        <begin position="247"/>
        <end position="341"/>
    </location>
</feature>
<feature type="domain" description="BACK">
    <location>
        <begin position="413"/>
        <end position="479"/>
    </location>
</feature>
<feature type="region of interest" description="Disordered" evidence="4">
    <location>
        <begin position="1"/>
        <end position="24"/>
    </location>
</feature>
<feature type="region of interest" description="Disordered" evidence="4">
    <location>
        <begin position="898"/>
        <end position="1050"/>
    </location>
</feature>
<feature type="region of interest" description="Disordered" evidence="4">
    <location>
        <begin position="1062"/>
        <end position="1130"/>
    </location>
</feature>
<feature type="compositionally biased region" description="Polar residues" evidence="4">
    <location>
        <begin position="1"/>
        <end position="10"/>
    </location>
</feature>
<feature type="compositionally biased region" description="Basic and acidic residues" evidence="4">
    <location>
        <begin position="923"/>
        <end position="935"/>
    </location>
</feature>
<feature type="compositionally biased region" description="Basic and acidic residues" evidence="4">
    <location>
        <begin position="996"/>
        <end position="1005"/>
    </location>
</feature>
<feature type="compositionally biased region" description="Polar residues" evidence="4">
    <location>
        <begin position="1063"/>
        <end position="1075"/>
    </location>
</feature>
<feature type="compositionally biased region" description="Basic and acidic residues" evidence="4">
    <location>
        <begin position="1080"/>
        <end position="1090"/>
    </location>
</feature>
<feature type="compositionally biased region" description="Basic and acidic residues" evidence="4">
    <location>
        <begin position="1101"/>
        <end position="1112"/>
    </location>
</feature>
<feature type="modified residue" description="Phosphoserine" evidence="2">
    <location>
        <position position="722"/>
    </location>
</feature>
<feature type="modified residue" description="Phosphoserine" evidence="2">
    <location>
        <position position="1008"/>
    </location>
</feature>
<feature type="lipid moiety-binding region" description="N-myristoyl glycine" evidence="1">
    <location>
        <position position="2"/>
    </location>
</feature>
<feature type="splice variant" id="VSP_013828" description="In isoform 2." evidence="8">
    <original>CEDIIAE</original>
    <variation>MNSICLL</variation>
    <location>
        <begin position="389"/>
        <end position="395"/>
    </location>
</feature>
<feature type="splice variant" id="VSP_013829" description="In isoform 2." evidence="8">
    <location>
        <begin position="397"/>
        <end position="1130"/>
    </location>
</feature>
<feature type="splice variant" id="VSP_013830" description="In isoform 3." evidence="7">
    <original>MKRGLISTPPSDMLPTAEGGKSNAWLRQK</original>
    <variation>VSSFLLLFLSRKEKCQTYPALIILNNFSY</variation>
    <location>
        <begin position="537"/>
        <end position="565"/>
    </location>
</feature>
<feature type="splice variant" id="VSP_013831" description="In isoform 3." evidence="7">
    <location>
        <begin position="566"/>
        <end position="1130"/>
    </location>
</feature>
<evidence type="ECO:0000250" key="1"/>
<evidence type="ECO:0000250" key="2">
    <source>
        <dbReference type="UniProtKB" id="Q9P203"/>
    </source>
</evidence>
<evidence type="ECO:0000255" key="3">
    <source>
        <dbReference type="PROSITE-ProRule" id="PRU00037"/>
    </source>
</evidence>
<evidence type="ECO:0000256" key="4">
    <source>
        <dbReference type="SAM" id="MobiDB-lite"/>
    </source>
</evidence>
<evidence type="ECO:0000269" key="5">
    <source>
    </source>
</evidence>
<evidence type="ECO:0000269" key="6">
    <source>
    </source>
</evidence>
<evidence type="ECO:0000303" key="7">
    <source>
    </source>
</evidence>
<evidence type="ECO:0000303" key="8">
    <source>
    </source>
</evidence>
<evidence type="ECO:0000305" key="9"/>
<accession>Q8CFE5</accession>
<accession>Q80TC3</accession>
<accession>Q8BZY9</accession>